<evidence type="ECO:0000255" key="1">
    <source>
        <dbReference type="HAMAP-Rule" id="MF_00833"/>
    </source>
</evidence>
<evidence type="ECO:0000256" key="2">
    <source>
        <dbReference type="SAM" id="MobiDB-lite"/>
    </source>
</evidence>
<sequence length="202" mass="20856">MTVSETESAVPVDASAYREAMSRLASAVHLITTDGPGGRAGFTASAVCSVSDAPPTLLVCINRAASAYAPLIRNGTLCVNTLGGGHETVAGLFGGRTPMDERFAAGTWRRLRSGAPALTDALVSFDCRIVERHAVGSHDVLYCAVEAVAAAGQADALLYSERRYRTLPRAPRGGSAPAEPARGARAIGARPPEGPVLALRSA</sequence>
<organism>
    <name type="scientific">Methylorubrum populi (strain ATCC BAA-705 / NCIMB 13946 / BJ001)</name>
    <name type="common">Methylobacterium populi</name>
    <dbReference type="NCBI Taxonomy" id="441620"/>
    <lineage>
        <taxon>Bacteria</taxon>
        <taxon>Pseudomonadati</taxon>
        <taxon>Pseudomonadota</taxon>
        <taxon>Alphaproteobacteria</taxon>
        <taxon>Hyphomicrobiales</taxon>
        <taxon>Methylobacteriaceae</taxon>
        <taxon>Methylorubrum</taxon>
    </lineage>
</organism>
<proteinExistence type="inferred from homology"/>
<reference key="1">
    <citation type="submission" date="2008-04" db="EMBL/GenBank/DDBJ databases">
        <title>Complete sequence of chromosome of Methylobacterium populi BJ001.</title>
        <authorList>
            <consortium name="US DOE Joint Genome Institute"/>
            <person name="Copeland A."/>
            <person name="Lucas S."/>
            <person name="Lapidus A."/>
            <person name="Glavina del Rio T."/>
            <person name="Dalin E."/>
            <person name="Tice H."/>
            <person name="Bruce D."/>
            <person name="Goodwin L."/>
            <person name="Pitluck S."/>
            <person name="Chertkov O."/>
            <person name="Brettin T."/>
            <person name="Detter J.C."/>
            <person name="Han C."/>
            <person name="Kuske C.R."/>
            <person name="Schmutz J."/>
            <person name="Larimer F."/>
            <person name="Land M."/>
            <person name="Hauser L."/>
            <person name="Kyrpides N."/>
            <person name="Mikhailova N."/>
            <person name="Marx C."/>
            <person name="Richardson P."/>
        </authorList>
    </citation>
    <scope>NUCLEOTIDE SEQUENCE [LARGE SCALE GENOMIC DNA]</scope>
    <source>
        <strain>ATCC BAA-705 / NCIMB 13946 / BJ001</strain>
    </source>
</reference>
<keyword id="KW-0285">Flavoprotein</keyword>
<keyword id="KW-0288">FMN</keyword>
<keyword id="KW-0520">NAD</keyword>
<keyword id="KW-0560">Oxidoreductase</keyword>
<protein>
    <recommendedName>
        <fullName evidence="1">FMN reductase (NADH) RutF</fullName>
        <ecNumber evidence="1">1.5.1.42</ecNumber>
    </recommendedName>
    <alternativeName>
        <fullName evidence="1">FMN reductase</fullName>
    </alternativeName>
    <alternativeName>
        <fullName evidence="1">NADH-flavin reductase RutF</fullName>
    </alternativeName>
    <alternativeName>
        <fullName evidence="1">NADH:flavin oxidoreductase</fullName>
    </alternativeName>
</protein>
<dbReference type="EC" id="1.5.1.42" evidence="1"/>
<dbReference type="EMBL" id="CP001029">
    <property type="protein sequence ID" value="ACB79254.1"/>
    <property type="molecule type" value="Genomic_DNA"/>
</dbReference>
<dbReference type="RefSeq" id="WP_012453004.1">
    <property type="nucleotide sequence ID" value="NC_010725.1"/>
</dbReference>
<dbReference type="SMR" id="B1ZB19"/>
<dbReference type="STRING" id="441620.Mpop_1079"/>
<dbReference type="KEGG" id="mpo:Mpop_1079"/>
<dbReference type="eggNOG" id="COG1853">
    <property type="taxonomic scope" value="Bacteria"/>
</dbReference>
<dbReference type="HOGENOM" id="CLU_059021_2_2_5"/>
<dbReference type="OrthoDB" id="9789254at2"/>
<dbReference type="Proteomes" id="UP000007136">
    <property type="component" value="Chromosome"/>
</dbReference>
<dbReference type="GO" id="GO:0010181">
    <property type="term" value="F:FMN binding"/>
    <property type="evidence" value="ECO:0007669"/>
    <property type="project" value="InterPro"/>
</dbReference>
<dbReference type="GO" id="GO:0052874">
    <property type="term" value="F:FMN reductase (NADH) activity"/>
    <property type="evidence" value="ECO:0007669"/>
    <property type="project" value="UniProtKB-EC"/>
</dbReference>
<dbReference type="GO" id="GO:0008752">
    <property type="term" value="F:FMN reductase [NAD(P)H] activity"/>
    <property type="evidence" value="ECO:0007669"/>
    <property type="project" value="InterPro"/>
</dbReference>
<dbReference type="GO" id="GO:0042602">
    <property type="term" value="F:riboflavin reductase (NADPH) activity"/>
    <property type="evidence" value="ECO:0007669"/>
    <property type="project" value="UniProtKB-UniRule"/>
</dbReference>
<dbReference type="GO" id="GO:0019740">
    <property type="term" value="P:nitrogen utilization"/>
    <property type="evidence" value="ECO:0007669"/>
    <property type="project" value="UniProtKB-UniRule"/>
</dbReference>
<dbReference type="GO" id="GO:0006212">
    <property type="term" value="P:uracil catabolic process"/>
    <property type="evidence" value="ECO:0007669"/>
    <property type="project" value="UniProtKB-UniRule"/>
</dbReference>
<dbReference type="Gene3D" id="2.30.110.10">
    <property type="entry name" value="Electron Transport, Fmn-binding Protein, Chain A"/>
    <property type="match status" value="1"/>
</dbReference>
<dbReference type="HAMAP" id="MF_00833">
    <property type="entry name" value="RutF"/>
    <property type="match status" value="1"/>
</dbReference>
<dbReference type="InterPro" id="IPR002563">
    <property type="entry name" value="Flavin_Rdtase-like_dom"/>
</dbReference>
<dbReference type="InterPro" id="IPR050268">
    <property type="entry name" value="NADH-dep_flavin_reductase"/>
</dbReference>
<dbReference type="InterPro" id="IPR019917">
    <property type="entry name" value="RutF"/>
</dbReference>
<dbReference type="InterPro" id="IPR012349">
    <property type="entry name" value="Split_barrel_FMN-bd"/>
</dbReference>
<dbReference type="NCBIfam" id="TIGR03615">
    <property type="entry name" value="RutF"/>
    <property type="match status" value="1"/>
</dbReference>
<dbReference type="PANTHER" id="PTHR30466">
    <property type="entry name" value="FLAVIN REDUCTASE"/>
    <property type="match status" value="1"/>
</dbReference>
<dbReference type="PANTHER" id="PTHR30466:SF1">
    <property type="entry name" value="FMN REDUCTASE (NADH) RUTF"/>
    <property type="match status" value="1"/>
</dbReference>
<dbReference type="Pfam" id="PF01613">
    <property type="entry name" value="Flavin_Reduct"/>
    <property type="match status" value="1"/>
</dbReference>
<dbReference type="SMART" id="SM00903">
    <property type="entry name" value="Flavin_Reduct"/>
    <property type="match status" value="1"/>
</dbReference>
<dbReference type="SUPFAM" id="SSF50475">
    <property type="entry name" value="FMN-binding split barrel"/>
    <property type="match status" value="1"/>
</dbReference>
<accession>B1ZB19</accession>
<name>RUTF_METPB</name>
<gene>
    <name evidence="1" type="primary">rutF</name>
    <name type="ordered locus">Mpop_1079</name>
</gene>
<comment type="function">
    <text evidence="1">Catalyzes the reduction of FMN to FMNH2 which is used to reduce pyrimidine by RutA via the Rut pathway.</text>
</comment>
<comment type="catalytic activity">
    <reaction evidence="1">
        <text>FMNH2 + NAD(+) = FMN + NADH + 2 H(+)</text>
        <dbReference type="Rhea" id="RHEA:21620"/>
        <dbReference type="ChEBI" id="CHEBI:15378"/>
        <dbReference type="ChEBI" id="CHEBI:57540"/>
        <dbReference type="ChEBI" id="CHEBI:57618"/>
        <dbReference type="ChEBI" id="CHEBI:57945"/>
        <dbReference type="ChEBI" id="CHEBI:58210"/>
        <dbReference type="EC" id="1.5.1.42"/>
    </reaction>
</comment>
<comment type="similarity">
    <text evidence="1">Belongs to the non-flavoprotein flavin reductase family. RutF subfamily.</text>
</comment>
<feature type="chain" id="PRO_0000403037" description="FMN reductase (NADH) RutF">
    <location>
        <begin position="1"/>
        <end position="202"/>
    </location>
</feature>
<feature type="region of interest" description="Disordered" evidence="2">
    <location>
        <begin position="168"/>
        <end position="202"/>
    </location>
</feature>
<feature type="compositionally biased region" description="Low complexity" evidence="2">
    <location>
        <begin position="168"/>
        <end position="191"/>
    </location>
</feature>